<dbReference type="EC" id="4.1.2.4" evidence="1"/>
<dbReference type="EMBL" id="AL591981">
    <property type="protein sequence ID" value="CAD00073.1"/>
    <property type="molecule type" value="Genomic_DNA"/>
</dbReference>
<dbReference type="PIR" id="AC1324">
    <property type="entry name" value="AC1324"/>
</dbReference>
<dbReference type="RefSeq" id="NP_465519.1">
    <property type="nucleotide sequence ID" value="NC_003210.1"/>
</dbReference>
<dbReference type="RefSeq" id="WP_009933101.1">
    <property type="nucleotide sequence ID" value="NZ_CP149495.1"/>
</dbReference>
<dbReference type="SMR" id="Q8Y5R1"/>
<dbReference type="STRING" id="169963.gene:17594680"/>
<dbReference type="PaxDb" id="169963-lmo1995"/>
<dbReference type="EnsemblBacteria" id="CAD00073">
    <property type="protein sequence ID" value="CAD00073"/>
    <property type="gene ID" value="CAD00073"/>
</dbReference>
<dbReference type="GeneID" id="984581"/>
<dbReference type="KEGG" id="lmo:lmo1995"/>
<dbReference type="PATRIC" id="fig|169963.11.peg.2042"/>
<dbReference type="eggNOG" id="COG0274">
    <property type="taxonomic scope" value="Bacteria"/>
</dbReference>
<dbReference type="HOGENOM" id="CLU_053595_0_2_9"/>
<dbReference type="OrthoDB" id="9778711at2"/>
<dbReference type="PhylomeDB" id="Q8Y5R1"/>
<dbReference type="BioCyc" id="LMON169963:LMO1995-MONOMER"/>
<dbReference type="UniPathway" id="UPA00002">
    <property type="reaction ID" value="UER00468"/>
</dbReference>
<dbReference type="Proteomes" id="UP000000817">
    <property type="component" value="Chromosome"/>
</dbReference>
<dbReference type="GO" id="GO:0005737">
    <property type="term" value="C:cytoplasm"/>
    <property type="evidence" value="ECO:0007669"/>
    <property type="project" value="UniProtKB-SubCell"/>
</dbReference>
<dbReference type="GO" id="GO:0004139">
    <property type="term" value="F:deoxyribose-phosphate aldolase activity"/>
    <property type="evidence" value="ECO:0000318"/>
    <property type="project" value="GO_Central"/>
</dbReference>
<dbReference type="GO" id="GO:0006018">
    <property type="term" value="P:2-deoxyribose 1-phosphate catabolic process"/>
    <property type="evidence" value="ECO:0007669"/>
    <property type="project" value="UniProtKB-UniRule"/>
</dbReference>
<dbReference type="GO" id="GO:0016052">
    <property type="term" value="P:carbohydrate catabolic process"/>
    <property type="evidence" value="ECO:0000318"/>
    <property type="project" value="GO_Central"/>
</dbReference>
<dbReference type="GO" id="GO:0009264">
    <property type="term" value="P:deoxyribonucleotide catabolic process"/>
    <property type="evidence" value="ECO:0000318"/>
    <property type="project" value="GO_Central"/>
</dbReference>
<dbReference type="CDD" id="cd00959">
    <property type="entry name" value="DeoC"/>
    <property type="match status" value="1"/>
</dbReference>
<dbReference type="FunFam" id="3.20.20.70:FF:000044">
    <property type="entry name" value="Deoxyribose-phosphate aldolase"/>
    <property type="match status" value="1"/>
</dbReference>
<dbReference type="Gene3D" id="3.20.20.70">
    <property type="entry name" value="Aldolase class I"/>
    <property type="match status" value="1"/>
</dbReference>
<dbReference type="HAMAP" id="MF_00114">
    <property type="entry name" value="DeoC_type1"/>
    <property type="match status" value="1"/>
</dbReference>
<dbReference type="InterPro" id="IPR013785">
    <property type="entry name" value="Aldolase_TIM"/>
</dbReference>
<dbReference type="InterPro" id="IPR011343">
    <property type="entry name" value="DeoC"/>
</dbReference>
<dbReference type="InterPro" id="IPR002915">
    <property type="entry name" value="DeoC/FbaB/LacD_aldolase"/>
</dbReference>
<dbReference type="InterPro" id="IPR028581">
    <property type="entry name" value="DeoC_typeI"/>
</dbReference>
<dbReference type="NCBIfam" id="TIGR00126">
    <property type="entry name" value="deoC"/>
    <property type="match status" value="1"/>
</dbReference>
<dbReference type="PANTHER" id="PTHR10889">
    <property type="entry name" value="DEOXYRIBOSE-PHOSPHATE ALDOLASE"/>
    <property type="match status" value="1"/>
</dbReference>
<dbReference type="PANTHER" id="PTHR10889:SF1">
    <property type="entry name" value="DEOXYRIBOSE-PHOSPHATE ALDOLASE"/>
    <property type="match status" value="1"/>
</dbReference>
<dbReference type="Pfam" id="PF01791">
    <property type="entry name" value="DeoC"/>
    <property type="match status" value="1"/>
</dbReference>
<dbReference type="PIRSF" id="PIRSF001357">
    <property type="entry name" value="DeoC"/>
    <property type="match status" value="1"/>
</dbReference>
<dbReference type="SMART" id="SM01133">
    <property type="entry name" value="DeoC"/>
    <property type="match status" value="1"/>
</dbReference>
<dbReference type="SUPFAM" id="SSF51569">
    <property type="entry name" value="Aldolase"/>
    <property type="match status" value="1"/>
</dbReference>
<proteinExistence type="inferred from homology"/>
<keyword id="KW-0963">Cytoplasm</keyword>
<keyword id="KW-0456">Lyase</keyword>
<keyword id="KW-1185">Reference proteome</keyword>
<keyword id="KW-0704">Schiff base</keyword>
<comment type="function">
    <text evidence="1">Catalyzes a reversible aldol reaction between acetaldehyde and D-glyceraldehyde 3-phosphate to generate 2-deoxy-D-ribose 5-phosphate.</text>
</comment>
<comment type="catalytic activity">
    <reaction evidence="1">
        <text>2-deoxy-D-ribose 5-phosphate = D-glyceraldehyde 3-phosphate + acetaldehyde</text>
        <dbReference type="Rhea" id="RHEA:12821"/>
        <dbReference type="ChEBI" id="CHEBI:15343"/>
        <dbReference type="ChEBI" id="CHEBI:59776"/>
        <dbReference type="ChEBI" id="CHEBI:62877"/>
        <dbReference type="EC" id="4.1.2.4"/>
    </reaction>
</comment>
<comment type="pathway">
    <text evidence="1">Carbohydrate degradation; 2-deoxy-D-ribose 1-phosphate degradation; D-glyceraldehyde 3-phosphate and acetaldehyde from 2-deoxy-alpha-D-ribose 1-phosphate: step 2/2.</text>
</comment>
<comment type="subcellular location">
    <subcellularLocation>
        <location evidence="1">Cytoplasm</location>
    </subcellularLocation>
</comment>
<comment type="similarity">
    <text evidence="1">Belongs to the DeoC/FbaB aldolase family. DeoC type 1 subfamily.</text>
</comment>
<organism>
    <name type="scientific">Listeria monocytogenes serovar 1/2a (strain ATCC BAA-679 / EGD-e)</name>
    <dbReference type="NCBI Taxonomy" id="169963"/>
    <lineage>
        <taxon>Bacteria</taxon>
        <taxon>Bacillati</taxon>
        <taxon>Bacillota</taxon>
        <taxon>Bacilli</taxon>
        <taxon>Bacillales</taxon>
        <taxon>Listeriaceae</taxon>
        <taxon>Listeria</taxon>
    </lineage>
</organism>
<feature type="chain" id="PRO_0000057239" description="Deoxyribose-phosphate aldolase">
    <location>
        <begin position="1"/>
        <end position="223"/>
    </location>
</feature>
<feature type="active site" description="Proton donor/acceptor" evidence="1">
    <location>
        <position position="89"/>
    </location>
</feature>
<feature type="active site" description="Schiff-base intermediate with acetaldehyde" evidence="1">
    <location>
        <position position="152"/>
    </location>
</feature>
<feature type="active site" description="Proton donor/acceptor" evidence="1">
    <location>
        <position position="181"/>
    </location>
</feature>
<accession>Q8Y5R1</accession>
<name>DEOC_LISMO</name>
<reference key="1">
    <citation type="journal article" date="2001" name="Science">
        <title>Comparative genomics of Listeria species.</title>
        <authorList>
            <person name="Glaser P."/>
            <person name="Frangeul L."/>
            <person name="Buchrieser C."/>
            <person name="Rusniok C."/>
            <person name="Amend A."/>
            <person name="Baquero F."/>
            <person name="Berche P."/>
            <person name="Bloecker H."/>
            <person name="Brandt P."/>
            <person name="Chakraborty T."/>
            <person name="Charbit A."/>
            <person name="Chetouani F."/>
            <person name="Couve E."/>
            <person name="de Daruvar A."/>
            <person name="Dehoux P."/>
            <person name="Domann E."/>
            <person name="Dominguez-Bernal G."/>
            <person name="Duchaud E."/>
            <person name="Durant L."/>
            <person name="Dussurget O."/>
            <person name="Entian K.-D."/>
            <person name="Fsihi H."/>
            <person name="Garcia-del Portillo F."/>
            <person name="Garrido P."/>
            <person name="Gautier L."/>
            <person name="Goebel W."/>
            <person name="Gomez-Lopez N."/>
            <person name="Hain T."/>
            <person name="Hauf J."/>
            <person name="Jackson D."/>
            <person name="Jones L.-M."/>
            <person name="Kaerst U."/>
            <person name="Kreft J."/>
            <person name="Kuhn M."/>
            <person name="Kunst F."/>
            <person name="Kurapkat G."/>
            <person name="Madueno E."/>
            <person name="Maitournam A."/>
            <person name="Mata Vicente J."/>
            <person name="Ng E."/>
            <person name="Nedjari H."/>
            <person name="Nordsiek G."/>
            <person name="Novella S."/>
            <person name="de Pablos B."/>
            <person name="Perez-Diaz J.-C."/>
            <person name="Purcell R."/>
            <person name="Remmel B."/>
            <person name="Rose M."/>
            <person name="Schlueter T."/>
            <person name="Simoes N."/>
            <person name="Tierrez A."/>
            <person name="Vazquez-Boland J.-A."/>
            <person name="Voss H."/>
            <person name="Wehland J."/>
            <person name="Cossart P."/>
        </authorList>
    </citation>
    <scope>NUCLEOTIDE SEQUENCE [LARGE SCALE GENOMIC DNA]</scope>
    <source>
        <strain>ATCC BAA-679 / EGD-e</strain>
    </source>
</reference>
<gene>
    <name evidence="1" type="primary">deoC</name>
    <name type="synonym">dra</name>
    <name type="ordered locus">lmo1995</name>
</gene>
<evidence type="ECO:0000255" key="1">
    <source>
        <dbReference type="HAMAP-Rule" id="MF_00114"/>
    </source>
</evidence>
<protein>
    <recommendedName>
        <fullName evidence="1">Deoxyribose-phosphate aldolase</fullName>
        <shortName evidence="1">DERA</shortName>
        <ecNumber evidence="1">4.1.2.4</ecNumber>
    </recommendedName>
    <alternativeName>
        <fullName evidence="1">2-deoxy-D-ribose 5-phosphate aldolase</fullName>
    </alternativeName>
    <alternativeName>
        <fullName evidence="1">Phosphodeoxyriboaldolase</fullName>
        <shortName evidence="1">Deoxyriboaldolase</shortName>
    </alternativeName>
</protein>
<sequence>MTIAKMIDHTALKPDTTKEQILTLTKEAREYGFASVCVNPTWVKLSAEQLAGAESVVCTVIGFPLGANTPEVKAFEVKDAIQNGAKEVDMVINIGALKDKDDELVERDIRAVVDVAKGKALVKVIIETCLLTDEEKVRACEIAVKAGTDFVKTSTGFSTGGATAEDIALMRKTVGPNIGVKASGGVRTKEDVEKMIEAGATRIGASAGVAIVSGEKPAKPDNY</sequence>